<dbReference type="EC" id="5.4.2.10" evidence="1"/>
<dbReference type="EMBL" id="CP000151">
    <property type="protein sequence ID" value="ABB08037.1"/>
    <property type="molecule type" value="Genomic_DNA"/>
</dbReference>
<dbReference type="RefSeq" id="WP_011351607.1">
    <property type="nucleotide sequence ID" value="NC_007510.1"/>
</dbReference>
<dbReference type="SMR" id="Q39HM9"/>
<dbReference type="GeneID" id="45094339"/>
<dbReference type="KEGG" id="bur:Bcep18194_A4441"/>
<dbReference type="PATRIC" id="fig|482957.22.peg.1340"/>
<dbReference type="HOGENOM" id="CLU_016950_7_0_4"/>
<dbReference type="Proteomes" id="UP000002705">
    <property type="component" value="Chromosome 1"/>
</dbReference>
<dbReference type="GO" id="GO:0005829">
    <property type="term" value="C:cytosol"/>
    <property type="evidence" value="ECO:0007669"/>
    <property type="project" value="TreeGrafter"/>
</dbReference>
<dbReference type="GO" id="GO:0000287">
    <property type="term" value="F:magnesium ion binding"/>
    <property type="evidence" value="ECO:0007669"/>
    <property type="project" value="UniProtKB-UniRule"/>
</dbReference>
<dbReference type="GO" id="GO:0008966">
    <property type="term" value="F:phosphoglucosamine mutase activity"/>
    <property type="evidence" value="ECO:0007669"/>
    <property type="project" value="UniProtKB-UniRule"/>
</dbReference>
<dbReference type="GO" id="GO:0004615">
    <property type="term" value="F:phosphomannomutase activity"/>
    <property type="evidence" value="ECO:0007669"/>
    <property type="project" value="TreeGrafter"/>
</dbReference>
<dbReference type="GO" id="GO:0005975">
    <property type="term" value="P:carbohydrate metabolic process"/>
    <property type="evidence" value="ECO:0007669"/>
    <property type="project" value="InterPro"/>
</dbReference>
<dbReference type="GO" id="GO:0009252">
    <property type="term" value="P:peptidoglycan biosynthetic process"/>
    <property type="evidence" value="ECO:0007669"/>
    <property type="project" value="TreeGrafter"/>
</dbReference>
<dbReference type="GO" id="GO:0006048">
    <property type="term" value="P:UDP-N-acetylglucosamine biosynthetic process"/>
    <property type="evidence" value="ECO:0007669"/>
    <property type="project" value="TreeGrafter"/>
</dbReference>
<dbReference type="CDD" id="cd05802">
    <property type="entry name" value="GlmM"/>
    <property type="match status" value="1"/>
</dbReference>
<dbReference type="FunFam" id="3.30.310.50:FF:000001">
    <property type="entry name" value="Phosphoglucosamine mutase"/>
    <property type="match status" value="1"/>
</dbReference>
<dbReference type="FunFam" id="3.40.120.10:FF:000001">
    <property type="entry name" value="Phosphoglucosamine mutase"/>
    <property type="match status" value="1"/>
</dbReference>
<dbReference type="FunFam" id="3.40.120.10:FF:000003">
    <property type="entry name" value="Phosphoglucosamine mutase"/>
    <property type="match status" value="1"/>
</dbReference>
<dbReference type="Gene3D" id="3.40.120.10">
    <property type="entry name" value="Alpha-D-Glucose-1,6-Bisphosphate, subunit A, domain 3"/>
    <property type="match status" value="3"/>
</dbReference>
<dbReference type="Gene3D" id="3.30.310.50">
    <property type="entry name" value="Alpha-D-phosphohexomutase, C-terminal domain"/>
    <property type="match status" value="1"/>
</dbReference>
<dbReference type="HAMAP" id="MF_01554_B">
    <property type="entry name" value="GlmM_B"/>
    <property type="match status" value="1"/>
</dbReference>
<dbReference type="InterPro" id="IPR005844">
    <property type="entry name" value="A-D-PHexomutase_a/b/a-I"/>
</dbReference>
<dbReference type="InterPro" id="IPR016055">
    <property type="entry name" value="A-D-PHexomutase_a/b/a-I/II/III"/>
</dbReference>
<dbReference type="InterPro" id="IPR005845">
    <property type="entry name" value="A-D-PHexomutase_a/b/a-II"/>
</dbReference>
<dbReference type="InterPro" id="IPR005846">
    <property type="entry name" value="A-D-PHexomutase_a/b/a-III"/>
</dbReference>
<dbReference type="InterPro" id="IPR005843">
    <property type="entry name" value="A-D-PHexomutase_C"/>
</dbReference>
<dbReference type="InterPro" id="IPR036900">
    <property type="entry name" value="A-D-PHexomutase_C_sf"/>
</dbReference>
<dbReference type="InterPro" id="IPR016066">
    <property type="entry name" value="A-D-PHexomutase_CS"/>
</dbReference>
<dbReference type="InterPro" id="IPR005841">
    <property type="entry name" value="Alpha-D-phosphohexomutase_SF"/>
</dbReference>
<dbReference type="InterPro" id="IPR006352">
    <property type="entry name" value="GlmM_bact"/>
</dbReference>
<dbReference type="InterPro" id="IPR050060">
    <property type="entry name" value="Phosphoglucosamine_mutase"/>
</dbReference>
<dbReference type="NCBIfam" id="TIGR01455">
    <property type="entry name" value="glmM"/>
    <property type="match status" value="1"/>
</dbReference>
<dbReference type="NCBIfam" id="NF008139">
    <property type="entry name" value="PRK10887.1"/>
    <property type="match status" value="1"/>
</dbReference>
<dbReference type="PANTHER" id="PTHR42946:SF1">
    <property type="entry name" value="PHOSPHOGLUCOMUTASE (ALPHA-D-GLUCOSE-1,6-BISPHOSPHATE-DEPENDENT)"/>
    <property type="match status" value="1"/>
</dbReference>
<dbReference type="PANTHER" id="PTHR42946">
    <property type="entry name" value="PHOSPHOHEXOSE MUTASE"/>
    <property type="match status" value="1"/>
</dbReference>
<dbReference type="Pfam" id="PF02878">
    <property type="entry name" value="PGM_PMM_I"/>
    <property type="match status" value="1"/>
</dbReference>
<dbReference type="Pfam" id="PF02879">
    <property type="entry name" value="PGM_PMM_II"/>
    <property type="match status" value="1"/>
</dbReference>
<dbReference type="Pfam" id="PF02880">
    <property type="entry name" value="PGM_PMM_III"/>
    <property type="match status" value="1"/>
</dbReference>
<dbReference type="Pfam" id="PF00408">
    <property type="entry name" value="PGM_PMM_IV"/>
    <property type="match status" value="1"/>
</dbReference>
<dbReference type="PRINTS" id="PR00509">
    <property type="entry name" value="PGMPMM"/>
</dbReference>
<dbReference type="SUPFAM" id="SSF55957">
    <property type="entry name" value="Phosphoglucomutase, C-terminal domain"/>
    <property type="match status" value="1"/>
</dbReference>
<dbReference type="SUPFAM" id="SSF53738">
    <property type="entry name" value="Phosphoglucomutase, first 3 domains"/>
    <property type="match status" value="3"/>
</dbReference>
<dbReference type="PROSITE" id="PS00710">
    <property type="entry name" value="PGM_PMM"/>
    <property type="match status" value="1"/>
</dbReference>
<evidence type="ECO:0000255" key="1">
    <source>
        <dbReference type="HAMAP-Rule" id="MF_01554"/>
    </source>
</evidence>
<proteinExistence type="inferred from homology"/>
<name>GLMM_BURL3</name>
<keyword id="KW-0413">Isomerase</keyword>
<keyword id="KW-0460">Magnesium</keyword>
<keyword id="KW-0479">Metal-binding</keyword>
<keyword id="KW-0597">Phosphoprotein</keyword>
<sequence>MGRRYFGTDGIRGTVGEGPITPDFVLRLGYAAGKVLASSAEVAAGSRPTVLIGKDTRVSGYMLEAALEAGFSAAGVDVMLAGPMPTPGVAYLTRALRLSAGVVISASHNPYHDNGIKFFSADGNKLPDDTEAAIEAWLDKPLECASSDGLGKARRLDDAAGRYIEFCKSTFPAAFNLRGLKLVIDCAHGAAYQIAPHVFHELGADVIPIGVAPNGFNINDGVGATAPDALVRAVRANHADLGIALDGDADRLQVVDSTGRLYNGDELLYVLVKDRIATDGKVEGAVGTLMTNLAVEVALQREGVKFVRAAVGDRYVLEQLREHGWQLGAEGSGHILSLDRHSTGDGIVSALLVLAALKRSGQTLAQMLDGVTLFPQKLINVRMKPGADWKGSTSIRAAIDTAEAALAGSGRVLIRASGTEPVLRVMVEAQQAADAVRHAETIADAVRAATT</sequence>
<accession>Q39HM9</accession>
<reference key="1">
    <citation type="submission" date="2005-10" db="EMBL/GenBank/DDBJ databases">
        <title>Complete sequence of chromosome 1 of Burkholderia sp. 383.</title>
        <authorList>
            <consortium name="US DOE Joint Genome Institute"/>
            <person name="Copeland A."/>
            <person name="Lucas S."/>
            <person name="Lapidus A."/>
            <person name="Barry K."/>
            <person name="Detter J.C."/>
            <person name="Glavina T."/>
            <person name="Hammon N."/>
            <person name="Israni S."/>
            <person name="Pitluck S."/>
            <person name="Chain P."/>
            <person name="Malfatti S."/>
            <person name="Shin M."/>
            <person name="Vergez L."/>
            <person name="Schmutz J."/>
            <person name="Larimer F."/>
            <person name="Land M."/>
            <person name="Kyrpides N."/>
            <person name="Lykidis A."/>
            <person name="Richardson P."/>
        </authorList>
    </citation>
    <scope>NUCLEOTIDE SEQUENCE [LARGE SCALE GENOMIC DNA]</scope>
    <source>
        <strain>ATCC 17760 / DSM 23089 / LMG 22485 / NCIMB 9086 / R18194 / 383</strain>
    </source>
</reference>
<gene>
    <name evidence="1" type="primary">glmM</name>
    <name type="ordered locus">Bcep18194_A4441</name>
</gene>
<protein>
    <recommendedName>
        <fullName evidence="1">Phosphoglucosamine mutase</fullName>
        <ecNumber evidence="1">5.4.2.10</ecNumber>
    </recommendedName>
</protein>
<organism>
    <name type="scientific">Burkholderia lata (strain ATCC 17760 / DSM 23089 / LMG 22485 / NCIMB 9086 / R18194 / 383)</name>
    <dbReference type="NCBI Taxonomy" id="482957"/>
    <lineage>
        <taxon>Bacteria</taxon>
        <taxon>Pseudomonadati</taxon>
        <taxon>Pseudomonadota</taxon>
        <taxon>Betaproteobacteria</taxon>
        <taxon>Burkholderiales</taxon>
        <taxon>Burkholderiaceae</taxon>
        <taxon>Burkholderia</taxon>
        <taxon>Burkholderia cepacia complex</taxon>
    </lineage>
</organism>
<comment type="function">
    <text evidence="1">Catalyzes the conversion of glucosamine-6-phosphate to glucosamine-1-phosphate.</text>
</comment>
<comment type="catalytic activity">
    <reaction evidence="1">
        <text>alpha-D-glucosamine 1-phosphate = D-glucosamine 6-phosphate</text>
        <dbReference type="Rhea" id="RHEA:23424"/>
        <dbReference type="ChEBI" id="CHEBI:58516"/>
        <dbReference type="ChEBI" id="CHEBI:58725"/>
        <dbReference type="EC" id="5.4.2.10"/>
    </reaction>
</comment>
<comment type="cofactor">
    <cofactor evidence="1">
        <name>Mg(2+)</name>
        <dbReference type="ChEBI" id="CHEBI:18420"/>
    </cofactor>
    <text evidence="1">Binds 1 Mg(2+) ion per subunit.</text>
</comment>
<comment type="PTM">
    <text evidence="1">Activated by phosphorylation.</text>
</comment>
<comment type="similarity">
    <text evidence="1">Belongs to the phosphohexose mutase family.</text>
</comment>
<feature type="chain" id="PRO_0000301293" description="Phosphoglucosamine mutase">
    <location>
        <begin position="1"/>
        <end position="451"/>
    </location>
</feature>
<feature type="active site" description="Phosphoserine intermediate" evidence="1">
    <location>
        <position position="107"/>
    </location>
</feature>
<feature type="binding site" description="via phosphate group" evidence="1">
    <location>
        <position position="107"/>
    </location>
    <ligand>
        <name>Mg(2+)</name>
        <dbReference type="ChEBI" id="CHEBI:18420"/>
    </ligand>
</feature>
<feature type="binding site" evidence="1">
    <location>
        <position position="246"/>
    </location>
    <ligand>
        <name>Mg(2+)</name>
        <dbReference type="ChEBI" id="CHEBI:18420"/>
    </ligand>
</feature>
<feature type="binding site" evidence="1">
    <location>
        <position position="248"/>
    </location>
    <ligand>
        <name>Mg(2+)</name>
        <dbReference type="ChEBI" id="CHEBI:18420"/>
    </ligand>
</feature>
<feature type="binding site" evidence="1">
    <location>
        <position position="250"/>
    </location>
    <ligand>
        <name>Mg(2+)</name>
        <dbReference type="ChEBI" id="CHEBI:18420"/>
    </ligand>
</feature>
<feature type="modified residue" description="Phosphoserine" evidence="1">
    <location>
        <position position="107"/>
    </location>
</feature>